<proteinExistence type="evidence at protein level"/>
<protein>
    <recommendedName>
        <fullName evidence="1">U-poneritoxin(01)-Om4a</fullName>
        <shortName evidence="1">U-PONTX(01)-Om4a</shortName>
    </recommendedName>
    <alternativeName>
        <fullName evidence="9">Pilosulin-like peptide 4</fullName>
        <shortName evidence="5">PLP4</shortName>
    </alternativeName>
    <alternativeName>
        <fullName evidence="6">Poneratoxin</fullName>
    </alternativeName>
</protein>
<keyword id="KW-0044">Antibiotic</keyword>
<keyword id="KW-0929">Antimicrobial</keyword>
<keyword id="KW-0204">Cytolysis</keyword>
<keyword id="KW-1015">Disulfide bond</keyword>
<keyword id="KW-0295">Fungicide</keyword>
<keyword id="KW-0354">Hemolysis</keyword>
<keyword id="KW-0964">Secreted</keyword>
<keyword id="KW-0732">Signal</keyword>
<accession>A0A348G5W0</accession>
<evidence type="ECO:0000250" key="1">
    <source>
        <dbReference type="UniProtKB" id="A0A348G5W2"/>
    </source>
</evidence>
<evidence type="ECO:0000255" key="2"/>
<evidence type="ECO:0000269" key="3">
    <source>
    </source>
</evidence>
<evidence type="ECO:0000269" key="4">
    <source>
    </source>
</evidence>
<evidence type="ECO:0000303" key="5">
    <source>
    </source>
</evidence>
<evidence type="ECO:0000305" key="6"/>
<evidence type="ECO:0000305" key="7">
    <source>
    </source>
</evidence>
<evidence type="ECO:0000305" key="8">
    <source>
    </source>
</evidence>
<evidence type="ECO:0000312" key="9">
    <source>
        <dbReference type="EMBL" id="BBF97833.1"/>
    </source>
</evidence>
<comment type="function">
    <text evidence="4">This homodimer composed of two cationic amphipathic alpha-helical peptides has antimicrobial activities against E.coli (MIC=3.1 uM), S.aureus (MIC=3.1 uM), and S.cerevisiae (MIC=3.1 uM). It also shows histamine-releasing activity (66.4% at 10 uM) and a weak hemolytic activity (10.5% at 50 uM).</text>
</comment>
<comment type="subunit">
    <text evidence="3 4">Homo- or heterodimer with PLP7 (AC A0A348G6I9); disulfide-linked.</text>
</comment>
<comment type="subcellular location">
    <subcellularLocation>
        <location evidence="3 4">Secreted</location>
    </subcellularLocation>
</comment>
<comment type="tissue specificity">
    <text evidence="7">Expressed by the venom gland.</text>
</comment>
<comment type="PTM">
    <text evidence="8">Truncated sequences of this peptide have also been found in the venom. It is possible they have been cleaved in the venom.</text>
</comment>
<comment type="mass spectrometry">
    <text>in reducing conditions, Monoisotopic mass.</text>
</comment>
<comment type="mass spectrometry">
    <text>Homodimer, Monoisotopic mass.</text>
</comment>
<comment type="mass spectrometry">
    <text>Heterodimer, Monoisotopic mass.</text>
</comment>
<comment type="similarity">
    <text evidence="6">Belongs to the formicidae venom precursor-01 superfamily.</text>
</comment>
<dbReference type="EMBL" id="FX985497">
    <property type="protein sequence ID" value="BBF97833.1"/>
    <property type="molecule type" value="mRNA"/>
</dbReference>
<dbReference type="SMR" id="A0A348G5W0"/>
<dbReference type="GO" id="GO:0005576">
    <property type="term" value="C:extracellular region"/>
    <property type="evidence" value="ECO:0007669"/>
    <property type="project" value="UniProtKB-SubCell"/>
</dbReference>
<dbReference type="GO" id="GO:0042742">
    <property type="term" value="P:defense response to bacterium"/>
    <property type="evidence" value="ECO:0007669"/>
    <property type="project" value="UniProtKB-KW"/>
</dbReference>
<dbReference type="GO" id="GO:0050832">
    <property type="term" value="P:defense response to fungus"/>
    <property type="evidence" value="ECO:0007669"/>
    <property type="project" value="UniProtKB-KW"/>
</dbReference>
<dbReference type="GO" id="GO:0031640">
    <property type="term" value="P:killing of cells of another organism"/>
    <property type="evidence" value="ECO:0007669"/>
    <property type="project" value="UniProtKB-KW"/>
</dbReference>
<organism>
    <name type="scientific">Odontomachus monticola</name>
    <name type="common">Trap-jaw ant</name>
    <dbReference type="NCBI Taxonomy" id="613454"/>
    <lineage>
        <taxon>Eukaryota</taxon>
        <taxon>Metazoa</taxon>
        <taxon>Ecdysozoa</taxon>
        <taxon>Arthropoda</taxon>
        <taxon>Hexapoda</taxon>
        <taxon>Insecta</taxon>
        <taxon>Pterygota</taxon>
        <taxon>Neoptera</taxon>
        <taxon>Endopterygota</taxon>
        <taxon>Hymenoptera</taxon>
        <taxon>Apocrita</taxon>
        <taxon>Aculeata</taxon>
        <taxon>Formicoidea</taxon>
        <taxon>Formicidae</taxon>
        <taxon>Ponerinae</taxon>
        <taxon>Ponerini</taxon>
        <taxon>Odontomachus</taxon>
    </lineage>
</organism>
<name>TX14A_ODOMO</name>
<feature type="signal peptide" evidence="2">
    <location>
        <begin position="1"/>
        <end position="25"/>
    </location>
</feature>
<feature type="propeptide" id="PRO_0000447073" evidence="7">
    <location>
        <begin position="26"/>
        <end position="39"/>
    </location>
</feature>
<feature type="peptide" id="PRO_5016599850" description="U-poneritoxin(01)-Om4a" evidence="4">
    <location>
        <begin position="40"/>
        <end position="68"/>
    </location>
</feature>
<feature type="disulfide bond" description="Interchain" evidence="3 4">
    <location>
        <position position="60"/>
    </location>
</feature>
<reference key="1">
    <citation type="journal article" date="2017" name="Toxins">
        <title>Combined venom gland transcriptomic and venom peptidomic analysis of the predatory ant Odontomachus monticola.</title>
        <authorList>
            <person name="Kazuma K."/>
            <person name="Masuko K."/>
            <person name="Konno K."/>
            <person name="Inagaki H."/>
        </authorList>
    </citation>
    <scope>NUCLEOTIDE SEQUENCE [MRNA]</scope>
    <scope>MASS SPECTROMETRY</scope>
    <scope>SUBCELLULAR LOCATION</scope>
    <scope>SUBUNIT</scope>
    <source>
        <tissue>Venom</tissue>
        <tissue>Venom gland</tissue>
    </source>
</reference>
<reference key="2">
    <citation type="journal article" date="2019" name="Toxins">
        <title>Mass spectrometry analysis and biological characterization of the predatory ant Odontomachus monticola venom and venom sac components.</title>
        <authorList>
            <person name="Tani N."/>
            <person name="Kazuma K."/>
            <person name="Ohtsuka Y."/>
            <person name="Shigeri Y."/>
            <person name="Masuko K."/>
            <person name="Konno K."/>
            <person name="Inagaki H."/>
        </authorList>
    </citation>
    <scope>FUNCTION</scope>
    <scope>MASS SPECTROMETRY</scope>
    <scope>SYNTHESIS OF PEPTIDE WITH UNKNOWN TERMINAL RESIDUES</scope>
    <scope>SUBUNIT</scope>
    <scope>SUBCELLULAR LOCATION</scope>
    <scope>DISULFIDE BOND</scope>
    <source>
        <tissue>Venom</tissue>
    </source>
</reference>
<sequence>MKPSSLTLAFLVVFMMAIMYNSVQAEALADADAEAFAEAGVKELFGKAWGLVKKHLPKACGLLGYVKQ</sequence>